<evidence type="ECO:0000250" key="1"/>
<evidence type="ECO:0000255" key="2"/>
<evidence type="ECO:0000303" key="3">
    <source>
    </source>
</evidence>
<evidence type="ECO:0000305" key="4"/>
<name>BASS1_ORYSJ</name>
<feature type="transit peptide" description="Chloroplast" evidence="2">
    <location>
        <begin position="1"/>
        <end position="64"/>
    </location>
</feature>
<feature type="chain" id="PRO_0000418608" description="Probable sodium/metabolite cotransporter BASS1, chloroplastic">
    <location>
        <begin position="65"/>
        <end position="406"/>
    </location>
</feature>
<feature type="transmembrane region" description="Helical" evidence="2">
    <location>
        <begin position="98"/>
        <end position="118"/>
    </location>
</feature>
<feature type="transmembrane region" description="Helical" evidence="2">
    <location>
        <begin position="123"/>
        <end position="143"/>
    </location>
</feature>
<feature type="transmembrane region" description="Helical" evidence="2">
    <location>
        <begin position="152"/>
        <end position="172"/>
    </location>
</feature>
<feature type="transmembrane region" description="Helical" evidence="2">
    <location>
        <begin position="187"/>
        <end position="209"/>
    </location>
</feature>
<feature type="transmembrane region" description="Helical" evidence="2">
    <location>
        <begin position="217"/>
        <end position="237"/>
    </location>
</feature>
<feature type="transmembrane region" description="Helical" evidence="2">
    <location>
        <begin position="252"/>
        <end position="272"/>
    </location>
</feature>
<feature type="transmembrane region" description="Helical" evidence="2">
    <location>
        <begin position="278"/>
        <end position="298"/>
    </location>
</feature>
<feature type="transmembrane region" description="Helical" evidence="2">
    <location>
        <begin position="315"/>
        <end position="335"/>
    </location>
</feature>
<feature type="transmembrane region" description="Helical" evidence="2">
    <location>
        <begin position="376"/>
        <end position="396"/>
    </location>
</feature>
<feature type="splice variant" id="VSP_044058" description="In isoform 2." evidence="3">
    <original>VLAPVLLGA</original>
    <variation>LEINLMLYC</variation>
    <location>
        <begin position="262"/>
        <end position="270"/>
    </location>
</feature>
<feature type="splice variant" id="VSP_044059" description="In isoform 2." evidence="3">
    <location>
        <begin position="271"/>
        <end position="406"/>
    </location>
</feature>
<protein>
    <recommendedName>
        <fullName>Probable sodium/metabolite cotransporter BASS1, chloroplastic</fullName>
    </recommendedName>
    <alternativeName>
        <fullName>Bile acid-sodium symporter family protein 1</fullName>
    </alternativeName>
</protein>
<sequence>MPLLRRPPAAPHRTPIHHDKRLHLFSTHNTRHRATVSSLPVTCLRIRYSSSNPVRHLCGIPSSRCHAAADPAPSKIPGGGSGALEAGVVGWRDLLLQVGEVLSLGFPVWVASACAVALWRPPAFLWVSPMAQIVGISFTMLGMGMTLTLDDLKTALLMPKELASGFLLQYSVMPLSGFLISKLLNLPSYYAAGLILVSCCPGGTASNIVTYLARGNVALSVLMTAASTFAAAFLTPLLTSKLAGQYVAVDPMGLFVSTSQVVLAPVLLGALLNQYCNGLVQLVSPLMPFIAVATVAVLCGNAIAQNASAILSSGLQVVMSVCWLHASGFFFGYVLSRTIGIDISSSRTISIEVGMQNSVLGVVLASKHFGNPLTAVPCAVSSVCHSVYGSLLAGIWRSLPPNDKGQ</sequence>
<dbReference type="EMBL" id="AL662977">
    <property type="protein sequence ID" value="CAD40745.2"/>
    <property type="molecule type" value="Genomic_DNA"/>
</dbReference>
<dbReference type="EMBL" id="AP008210">
    <property type="protein sequence ID" value="BAF14515.1"/>
    <property type="molecule type" value="Genomic_DNA"/>
</dbReference>
<dbReference type="EMBL" id="AP014960">
    <property type="protein sequence ID" value="BAS88891.1"/>
    <property type="molecule type" value="Genomic_DNA"/>
</dbReference>
<dbReference type="EMBL" id="AP014960">
    <property type="protein sequence ID" value="BAS88892.1"/>
    <property type="molecule type" value="Genomic_DNA"/>
</dbReference>
<dbReference type="EMBL" id="AK060452">
    <property type="protein sequence ID" value="BAG87453.1"/>
    <property type="molecule type" value="mRNA"/>
</dbReference>
<dbReference type="EMBL" id="AK121764">
    <property type="protein sequence ID" value="BAH00647.1"/>
    <property type="molecule type" value="mRNA"/>
</dbReference>
<dbReference type="RefSeq" id="XP_015633692.1">
    <property type="nucleotide sequence ID" value="XM_015778206.1"/>
</dbReference>
<dbReference type="RefSeq" id="XP_015633693.1">
    <molecule id="Q7XVB3-1"/>
    <property type="nucleotide sequence ID" value="XM_015778207.1"/>
</dbReference>
<dbReference type="SMR" id="Q7XVB3"/>
<dbReference type="FunCoup" id="Q7XVB3">
    <property type="interactions" value="705"/>
</dbReference>
<dbReference type="STRING" id="39947.Q7XVB3"/>
<dbReference type="PaxDb" id="39947-Q7XVB3"/>
<dbReference type="EnsemblPlants" id="Os04t0381100-02">
    <molecule id="Q7XVB3-1"/>
    <property type="protein sequence ID" value="Os04t0381100-02"/>
    <property type="gene ID" value="Os04g0381100"/>
</dbReference>
<dbReference type="GeneID" id="4335634"/>
<dbReference type="Gramene" id="Os04t0381100-02">
    <molecule id="Q7XVB3-1"/>
    <property type="protein sequence ID" value="Os04t0381100-02"/>
    <property type="gene ID" value="Os04g0381100"/>
</dbReference>
<dbReference type="KEGG" id="dosa:Os04g0381100"/>
<dbReference type="KEGG" id="osa:4335634"/>
<dbReference type="eggNOG" id="KOG2718">
    <property type="taxonomic scope" value="Eukaryota"/>
</dbReference>
<dbReference type="HOGENOM" id="CLU_034788_1_2_1"/>
<dbReference type="InParanoid" id="Q7XVB3"/>
<dbReference type="OMA" id="NWVQPKW"/>
<dbReference type="OrthoDB" id="203097at2759"/>
<dbReference type="Proteomes" id="UP000000763">
    <property type="component" value="Chromosome 4"/>
</dbReference>
<dbReference type="Proteomes" id="UP000059680">
    <property type="component" value="Chromosome 4"/>
</dbReference>
<dbReference type="GO" id="GO:0009706">
    <property type="term" value="C:chloroplast inner membrane"/>
    <property type="evidence" value="ECO:0007669"/>
    <property type="project" value="EnsemblPlants"/>
</dbReference>
<dbReference type="GO" id="GO:0098717">
    <property type="term" value="P:pantothenate import across plasma membrane"/>
    <property type="evidence" value="ECO:0007669"/>
    <property type="project" value="EnsemblPlants"/>
</dbReference>
<dbReference type="Gene3D" id="1.20.1530.20">
    <property type="match status" value="1"/>
</dbReference>
<dbReference type="InterPro" id="IPR002657">
    <property type="entry name" value="BilAc:Na_symport/Acr3"/>
</dbReference>
<dbReference type="InterPro" id="IPR004710">
    <property type="entry name" value="Bilac:Na_transpt"/>
</dbReference>
<dbReference type="InterPro" id="IPR038770">
    <property type="entry name" value="Na+/solute_symporter_sf"/>
</dbReference>
<dbReference type="PANTHER" id="PTHR10361:SF28">
    <property type="entry name" value="P3 PROTEIN-RELATED"/>
    <property type="match status" value="1"/>
</dbReference>
<dbReference type="PANTHER" id="PTHR10361">
    <property type="entry name" value="SODIUM-BILE ACID COTRANSPORTER"/>
    <property type="match status" value="1"/>
</dbReference>
<dbReference type="Pfam" id="PF01758">
    <property type="entry name" value="SBF"/>
    <property type="match status" value="1"/>
</dbReference>
<organism>
    <name type="scientific">Oryza sativa subsp. japonica</name>
    <name type="common">Rice</name>
    <dbReference type="NCBI Taxonomy" id="39947"/>
    <lineage>
        <taxon>Eukaryota</taxon>
        <taxon>Viridiplantae</taxon>
        <taxon>Streptophyta</taxon>
        <taxon>Embryophyta</taxon>
        <taxon>Tracheophyta</taxon>
        <taxon>Spermatophyta</taxon>
        <taxon>Magnoliopsida</taxon>
        <taxon>Liliopsida</taxon>
        <taxon>Poales</taxon>
        <taxon>Poaceae</taxon>
        <taxon>BOP clade</taxon>
        <taxon>Oryzoideae</taxon>
        <taxon>Oryzeae</taxon>
        <taxon>Oryzinae</taxon>
        <taxon>Oryza</taxon>
        <taxon>Oryza sativa</taxon>
    </lineage>
</organism>
<reference key="1">
    <citation type="journal article" date="2002" name="Nature">
        <title>Sequence and analysis of rice chromosome 4.</title>
        <authorList>
            <person name="Feng Q."/>
            <person name="Zhang Y."/>
            <person name="Hao P."/>
            <person name="Wang S."/>
            <person name="Fu G."/>
            <person name="Huang Y."/>
            <person name="Li Y."/>
            <person name="Zhu J."/>
            <person name="Liu Y."/>
            <person name="Hu X."/>
            <person name="Jia P."/>
            <person name="Zhang Y."/>
            <person name="Zhao Q."/>
            <person name="Ying K."/>
            <person name="Yu S."/>
            <person name="Tang Y."/>
            <person name="Weng Q."/>
            <person name="Zhang L."/>
            <person name="Lu Y."/>
            <person name="Mu J."/>
            <person name="Lu Y."/>
            <person name="Zhang L.S."/>
            <person name="Yu Z."/>
            <person name="Fan D."/>
            <person name="Liu X."/>
            <person name="Lu T."/>
            <person name="Li C."/>
            <person name="Wu Y."/>
            <person name="Sun T."/>
            <person name="Lei H."/>
            <person name="Li T."/>
            <person name="Hu H."/>
            <person name="Guan J."/>
            <person name="Wu M."/>
            <person name="Zhang R."/>
            <person name="Zhou B."/>
            <person name="Chen Z."/>
            <person name="Chen L."/>
            <person name="Jin Z."/>
            <person name="Wang R."/>
            <person name="Yin H."/>
            <person name="Cai Z."/>
            <person name="Ren S."/>
            <person name="Lv G."/>
            <person name="Gu W."/>
            <person name="Zhu G."/>
            <person name="Tu Y."/>
            <person name="Jia J."/>
            <person name="Zhang Y."/>
            <person name="Chen J."/>
            <person name="Kang H."/>
            <person name="Chen X."/>
            <person name="Shao C."/>
            <person name="Sun Y."/>
            <person name="Hu Q."/>
            <person name="Zhang X."/>
            <person name="Zhang W."/>
            <person name="Wang L."/>
            <person name="Ding C."/>
            <person name="Sheng H."/>
            <person name="Gu J."/>
            <person name="Chen S."/>
            <person name="Ni L."/>
            <person name="Zhu F."/>
            <person name="Chen W."/>
            <person name="Lan L."/>
            <person name="Lai Y."/>
            <person name="Cheng Z."/>
            <person name="Gu M."/>
            <person name="Jiang J."/>
            <person name="Li J."/>
            <person name="Hong G."/>
            <person name="Xue Y."/>
            <person name="Han B."/>
        </authorList>
    </citation>
    <scope>NUCLEOTIDE SEQUENCE [LARGE SCALE GENOMIC DNA]</scope>
    <source>
        <strain>cv. Nipponbare</strain>
    </source>
</reference>
<reference key="2">
    <citation type="journal article" date="2005" name="Nature">
        <title>The map-based sequence of the rice genome.</title>
        <authorList>
            <consortium name="International rice genome sequencing project (IRGSP)"/>
        </authorList>
    </citation>
    <scope>NUCLEOTIDE SEQUENCE [LARGE SCALE GENOMIC DNA]</scope>
    <source>
        <strain>cv. Nipponbare</strain>
    </source>
</reference>
<reference key="3">
    <citation type="journal article" date="2008" name="Nucleic Acids Res.">
        <title>The rice annotation project database (RAP-DB): 2008 update.</title>
        <authorList>
            <consortium name="The rice annotation project (RAP)"/>
        </authorList>
    </citation>
    <scope>GENOME REANNOTATION</scope>
    <source>
        <strain>cv. Nipponbare</strain>
    </source>
</reference>
<reference key="4">
    <citation type="journal article" date="2013" name="Rice">
        <title>Improvement of the Oryza sativa Nipponbare reference genome using next generation sequence and optical map data.</title>
        <authorList>
            <person name="Kawahara Y."/>
            <person name="de la Bastide M."/>
            <person name="Hamilton J.P."/>
            <person name="Kanamori H."/>
            <person name="McCombie W.R."/>
            <person name="Ouyang S."/>
            <person name="Schwartz D.C."/>
            <person name="Tanaka T."/>
            <person name="Wu J."/>
            <person name="Zhou S."/>
            <person name="Childs K.L."/>
            <person name="Davidson R.M."/>
            <person name="Lin H."/>
            <person name="Quesada-Ocampo L."/>
            <person name="Vaillancourt B."/>
            <person name="Sakai H."/>
            <person name="Lee S.S."/>
            <person name="Kim J."/>
            <person name="Numa H."/>
            <person name="Itoh T."/>
            <person name="Buell C.R."/>
            <person name="Matsumoto T."/>
        </authorList>
    </citation>
    <scope>GENOME REANNOTATION</scope>
    <source>
        <strain>cv. Nipponbare</strain>
    </source>
</reference>
<reference key="5">
    <citation type="journal article" date="2003" name="Science">
        <title>Collection, mapping, and annotation of over 28,000 cDNA clones from japonica rice.</title>
        <authorList>
            <consortium name="The rice full-length cDNA consortium"/>
        </authorList>
    </citation>
    <scope>NUCLEOTIDE SEQUENCE [LARGE SCALE MRNA] (ISOFORMS 1 AND 2)</scope>
    <source>
        <strain>cv. Nipponbare</strain>
    </source>
</reference>
<comment type="function">
    <text evidence="1">May function as sodium-coupled metabolite transporter across the chloroplast envelope.</text>
</comment>
<comment type="subcellular location">
    <subcellularLocation>
        <location evidence="4">Membrane</location>
        <topology evidence="4">Multi-pass membrane protein</topology>
    </subcellularLocation>
    <subcellularLocation>
        <location evidence="4">Plastid</location>
        <location evidence="4">Chloroplast envelope</location>
    </subcellularLocation>
</comment>
<comment type="alternative products">
    <event type="alternative splicing"/>
    <isoform>
        <id>Q7XVB3-1</id>
        <name>1</name>
        <sequence type="displayed"/>
    </isoform>
    <isoform>
        <id>Q7XVB3-2</id>
        <name>2</name>
        <sequence type="described" ref="VSP_044058 VSP_044059"/>
    </isoform>
</comment>
<comment type="similarity">
    <text evidence="4">Belongs to the bile acid:sodium symporter (BASS) (TC 2.A.28) family.</text>
</comment>
<accession>Q7XVB3</accession>
<accession>A0A0P0W9L6</accession>
<accession>B7E506</accession>
<proteinExistence type="evidence at transcript level"/>
<keyword id="KW-0025">Alternative splicing</keyword>
<keyword id="KW-0150">Chloroplast</keyword>
<keyword id="KW-0472">Membrane</keyword>
<keyword id="KW-0934">Plastid</keyword>
<keyword id="KW-1185">Reference proteome</keyword>
<keyword id="KW-0809">Transit peptide</keyword>
<keyword id="KW-0812">Transmembrane</keyword>
<keyword id="KW-1133">Transmembrane helix</keyword>
<keyword id="KW-0813">Transport</keyword>
<gene>
    <name type="primary">BASS1</name>
    <name type="ordered locus">Os04g0381100</name>
    <name type="ordered locus">LOC_Os04g31210</name>
    <name type="ORF">OSJNBa0072D21.3</name>
</gene>